<gene>
    <name evidence="1" type="primary">csrA</name>
    <name type="ordered locus">APL_0653</name>
</gene>
<accession>A3N017</accession>
<protein>
    <recommendedName>
        <fullName evidence="1">Translational regulator CsrA</fullName>
    </recommendedName>
    <alternativeName>
        <fullName evidence="1">Carbon storage regulator</fullName>
    </alternativeName>
</protein>
<keyword id="KW-0010">Activator</keyword>
<keyword id="KW-0963">Cytoplasm</keyword>
<keyword id="KW-1185">Reference proteome</keyword>
<keyword id="KW-0678">Repressor</keyword>
<keyword id="KW-0694">RNA-binding</keyword>
<keyword id="KW-0810">Translation regulation</keyword>
<reference key="1">
    <citation type="journal article" date="2008" name="J. Bacteriol.">
        <title>The complete genome sequence of Actinobacillus pleuropneumoniae L20 (serotype 5b).</title>
        <authorList>
            <person name="Foote S.J."/>
            <person name="Bosse J.T."/>
            <person name="Bouevitch A.B."/>
            <person name="Langford P.R."/>
            <person name="Young N.M."/>
            <person name="Nash J.H.E."/>
        </authorList>
    </citation>
    <scope>NUCLEOTIDE SEQUENCE [LARGE SCALE GENOMIC DNA]</scope>
    <source>
        <strain>L20</strain>
    </source>
</reference>
<name>CSRA_ACTP2</name>
<comment type="function">
    <text evidence="1">A key translational regulator that binds mRNA to regulate translation initiation and/or mRNA stability. Mediates global changes in gene expression, shifting from rapid growth to stress survival by linking envelope stress, the stringent response and the catabolite repression systems. Usually binds in the 5'-UTR; binding at or near the Shine-Dalgarno sequence prevents ribosome-binding, repressing translation, binding elsewhere in the 5'-UTR can activate translation and/or stabilize the mRNA. Its function is antagonized by small RNA(s).</text>
</comment>
<comment type="subunit">
    <text evidence="1">Homodimer; the beta-strands of each monomer intercalate to form a hydrophobic core, while the alpha-helices form wings that extend away from the core.</text>
</comment>
<comment type="subcellular location">
    <subcellularLocation>
        <location evidence="1">Cytoplasm</location>
    </subcellularLocation>
</comment>
<comment type="similarity">
    <text evidence="1">Belongs to the CsrA/RsmA family.</text>
</comment>
<proteinExistence type="inferred from homology"/>
<organism>
    <name type="scientific">Actinobacillus pleuropneumoniae serotype 5b (strain L20)</name>
    <dbReference type="NCBI Taxonomy" id="416269"/>
    <lineage>
        <taxon>Bacteria</taxon>
        <taxon>Pseudomonadati</taxon>
        <taxon>Pseudomonadota</taxon>
        <taxon>Gammaproteobacteria</taxon>
        <taxon>Pasteurellales</taxon>
        <taxon>Pasteurellaceae</taxon>
        <taxon>Actinobacillus</taxon>
    </lineage>
</organism>
<evidence type="ECO:0000255" key="1">
    <source>
        <dbReference type="HAMAP-Rule" id="MF_00167"/>
    </source>
</evidence>
<dbReference type="EMBL" id="CP000569">
    <property type="protein sequence ID" value="ABN73753.1"/>
    <property type="molecule type" value="Genomic_DNA"/>
</dbReference>
<dbReference type="RefSeq" id="WP_005596946.1">
    <property type="nucleotide sequence ID" value="NC_009053.1"/>
</dbReference>
<dbReference type="SMR" id="A3N017"/>
<dbReference type="STRING" id="416269.APL_0653"/>
<dbReference type="EnsemblBacteria" id="ABN73753">
    <property type="protein sequence ID" value="ABN73753"/>
    <property type="gene ID" value="APL_0653"/>
</dbReference>
<dbReference type="GeneID" id="48598836"/>
<dbReference type="KEGG" id="apl:APL_0653"/>
<dbReference type="eggNOG" id="COG1551">
    <property type="taxonomic scope" value="Bacteria"/>
</dbReference>
<dbReference type="HOGENOM" id="CLU_164837_2_1_6"/>
<dbReference type="Proteomes" id="UP000001432">
    <property type="component" value="Chromosome"/>
</dbReference>
<dbReference type="GO" id="GO:0005829">
    <property type="term" value="C:cytosol"/>
    <property type="evidence" value="ECO:0007669"/>
    <property type="project" value="TreeGrafter"/>
</dbReference>
<dbReference type="GO" id="GO:0048027">
    <property type="term" value="F:mRNA 5'-UTR binding"/>
    <property type="evidence" value="ECO:0007669"/>
    <property type="project" value="UniProtKB-UniRule"/>
</dbReference>
<dbReference type="GO" id="GO:0006402">
    <property type="term" value="P:mRNA catabolic process"/>
    <property type="evidence" value="ECO:0007669"/>
    <property type="project" value="InterPro"/>
</dbReference>
<dbReference type="GO" id="GO:0045947">
    <property type="term" value="P:negative regulation of translational initiation"/>
    <property type="evidence" value="ECO:0007669"/>
    <property type="project" value="UniProtKB-UniRule"/>
</dbReference>
<dbReference type="GO" id="GO:0045948">
    <property type="term" value="P:positive regulation of translational initiation"/>
    <property type="evidence" value="ECO:0007669"/>
    <property type="project" value="UniProtKB-UniRule"/>
</dbReference>
<dbReference type="GO" id="GO:0006109">
    <property type="term" value="P:regulation of carbohydrate metabolic process"/>
    <property type="evidence" value="ECO:0007669"/>
    <property type="project" value="UniProtKB-UniRule"/>
</dbReference>
<dbReference type="FunFam" id="2.60.40.4380:FF:000001">
    <property type="entry name" value="Translational regulator CsrA"/>
    <property type="match status" value="1"/>
</dbReference>
<dbReference type="Gene3D" id="2.60.40.4380">
    <property type="entry name" value="Translational regulator CsrA"/>
    <property type="match status" value="1"/>
</dbReference>
<dbReference type="HAMAP" id="MF_00167">
    <property type="entry name" value="CsrA"/>
    <property type="match status" value="1"/>
</dbReference>
<dbReference type="InterPro" id="IPR003751">
    <property type="entry name" value="CsrA"/>
</dbReference>
<dbReference type="InterPro" id="IPR036107">
    <property type="entry name" value="CsrA_sf"/>
</dbReference>
<dbReference type="NCBIfam" id="TIGR00202">
    <property type="entry name" value="csrA"/>
    <property type="match status" value="1"/>
</dbReference>
<dbReference type="NCBIfam" id="NF002469">
    <property type="entry name" value="PRK01712.1"/>
    <property type="match status" value="1"/>
</dbReference>
<dbReference type="PANTHER" id="PTHR34984">
    <property type="entry name" value="CARBON STORAGE REGULATOR"/>
    <property type="match status" value="1"/>
</dbReference>
<dbReference type="PANTHER" id="PTHR34984:SF1">
    <property type="entry name" value="CARBON STORAGE REGULATOR"/>
    <property type="match status" value="1"/>
</dbReference>
<dbReference type="Pfam" id="PF02599">
    <property type="entry name" value="CsrA"/>
    <property type="match status" value="1"/>
</dbReference>
<dbReference type="SUPFAM" id="SSF117130">
    <property type="entry name" value="CsrA-like"/>
    <property type="match status" value="1"/>
</dbReference>
<sequence length="64" mass="7073">MLILTRKIGESLLIGDNVEITVLSVRGNQVKLGVNAPKEVSVHREEIYQRIKALADDVASDTQQ</sequence>
<feature type="chain" id="PRO_1000023355" description="Translational regulator CsrA">
    <location>
        <begin position="1"/>
        <end position="64"/>
    </location>
</feature>